<evidence type="ECO:0000255" key="1">
    <source>
        <dbReference type="HAMAP-Rule" id="MF_01350"/>
    </source>
</evidence>
<sequence>MSWFTPELIEILISVLKAVVILLVVVTCGAFMSFGERRLLGLFQNRYGPNRVGWGGSLQLVADMIKMFFKEDWVPRFSDRAIFTLAPVIAFTSLLLSFAIVPVSPTWAVADLNIGILFFLMMAGLAVYAVLFAGWASNNKYSLLGAMRASAQTLSYEVFLGLSLMGVVAQAGSFNMQDIVNSQEHVWNVIPQFFGFLTFAIAGVAVCHRHPFDQPEAEQELADGYHIEYSGMKFGLFFVGEYIGIVTVSALIVTLFFGGWQGPFLPPFIWFALKTAFFMVMFILIRASLPRPRYDQVMSFGWKVCLPLTLLNLLATAAVILYNAQ</sequence>
<dbReference type="EC" id="7.1.1.-" evidence="1"/>
<dbReference type="EMBL" id="CP000668">
    <property type="protein sequence ID" value="ABP40342.1"/>
    <property type="molecule type" value="Genomic_DNA"/>
</dbReference>
<dbReference type="RefSeq" id="WP_002210274.1">
    <property type="nucleotide sequence ID" value="NZ_CP009715.1"/>
</dbReference>
<dbReference type="SMR" id="A4TM30"/>
<dbReference type="GeneID" id="96666080"/>
<dbReference type="KEGG" id="ypp:YPDSF_1959"/>
<dbReference type="PATRIC" id="fig|386656.14.peg.3424"/>
<dbReference type="GO" id="GO:0005886">
    <property type="term" value="C:plasma membrane"/>
    <property type="evidence" value="ECO:0007669"/>
    <property type="project" value="UniProtKB-SubCell"/>
</dbReference>
<dbReference type="GO" id="GO:0003954">
    <property type="term" value="F:NADH dehydrogenase activity"/>
    <property type="evidence" value="ECO:0007669"/>
    <property type="project" value="TreeGrafter"/>
</dbReference>
<dbReference type="GO" id="GO:0016655">
    <property type="term" value="F:oxidoreductase activity, acting on NAD(P)H, quinone or similar compound as acceptor"/>
    <property type="evidence" value="ECO:0007669"/>
    <property type="project" value="UniProtKB-UniRule"/>
</dbReference>
<dbReference type="GO" id="GO:0048038">
    <property type="term" value="F:quinone binding"/>
    <property type="evidence" value="ECO:0007669"/>
    <property type="project" value="UniProtKB-KW"/>
</dbReference>
<dbReference type="GO" id="GO:0009060">
    <property type="term" value="P:aerobic respiration"/>
    <property type="evidence" value="ECO:0007669"/>
    <property type="project" value="TreeGrafter"/>
</dbReference>
<dbReference type="HAMAP" id="MF_01350">
    <property type="entry name" value="NDH1_NuoH"/>
    <property type="match status" value="1"/>
</dbReference>
<dbReference type="InterPro" id="IPR001694">
    <property type="entry name" value="NADH_UbQ_OxRdtase_su1/FPO"/>
</dbReference>
<dbReference type="InterPro" id="IPR018086">
    <property type="entry name" value="NADH_UbQ_OxRdtase_su1_CS"/>
</dbReference>
<dbReference type="NCBIfam" id="NF004740">
    <property type="entry name" value="PRK06076.1-1"/>
    <property type="match status" value="1"/>
</dbReference>
<dbReference type="NCBIfam" id="NF004741">
    <property type="entry name" value="PRK06076.1-2"/>
    <property type="match status" value="1"/>
</dbReference>
<dbReference type="PANTHER" id="PTHR11432">
    <property type="entry name" value="NADH DEHYDROGENASE SUBUNIT 1"/>
    <property type="match status" value="1"/>
</dbReference>
<dbReference type="PANTHER" id="PTHR11432:SF3">
    <property type="entry name" value="NADH-UBIQUINONE OXIDOREDUCTASE CHAIN 1"/>
    <property type="match status" value="1"/>
</dbReference>
<dbReference type="Pfam" id="PF00146">
    <property type="entry name" value="NADHdh"/>
    <property type="match status" value="1"/>
</dbReference>
<dbReference type="PROSITE" id="PS00667">
    <property type="entry name" value="COMPLEX1_ND1_1"/>
    <property type="match status" value="1"/>
</dbReference>
<dbReference type="PROSITE" id="PS00668">
    <property type="entry name" value="COMPLEX1_ND1_2"/>
    <property type="match status" value="1"/>
</dbReference>
<proteinExistence type="inferred from homology"/>
<gene>
    <name evidence="1" type="primary">nuoH</name>
    <name type="ordered locus">YPDSF_1959</name>
</gene>
<feature type="chain" id="PRO_0000298861" description="NADH-quinone oxidoreductase subunit H">
    <location>
        <begin position="1"/>
        <end position="325"/>
    </location>
</feature>
<feature type="transmembrane region" description="Helical" evidence="1">
    <location>
        <begin position="11"/>
        <end position="31"/>
    </location>
</feature>
<feature type="transmembrane region" description="Helical" evidence="1">
    <location>
        <begin position="81"/>
        <end position="101"/>
    </location>
</feature>
<feature type="transmembrane region" description="Helical" evidence="1">
    <location>
        <begin position="114"/>
        <end position="134"/>
    </location>
</feature>
<feature type="transmembrane region" description="Helical" evidence="1">
    <location>
        <begin position="154"/>
        <end position="174"/>
    </location>
</feature>
<feature type="transmembrane region" description="Helical" evidence="1">
    <location>
        <begin position="186"/>
        <end position="206"/>
    </location>
</feature>
<feature type="transmembrane region" description="Helical" evidence="1">
    <location>
        <begin position="237"/>
        <end position="257"/>
    </location>
</feature>
<feature type="transmembrane region" description="Helical" evidence="1">
    <location>
        <begin position="265"/>
        <end position="285"/>
    </location>
</feature>
<feature type="transmembrane region" description="Helical" evidence="1">
    <location>
        <begin position="304"/>
        <end position="324"/>
    </location>
</feature>
<name>NUOH_YERPP</name>
<reference key="1">
    <citation type="submission" date="2007-02" db="EMBL/GenBank/DDBJ databases">
        <title>Complete sequence of chromosome of Yersinia pestis Pestoides F.</title>
        <authorList>
            <consortium name="US DOE Joint Genome Institute"/>
            <person name="Copeland A."/>
            <person name="Lucas S."/>
            <person name="Lapidus A."/>
            <person name="Barry K."/>
            <person name="Detter J.C."/>
            <person name="Glavina del Rio T."/>
            <person name="Hammon N."/>
            <person name="Israni S."/>
            <person name="Dalin E."/>
            <person name="Tice H."/>
            <person name="Pitluck S."/>
            <person name="Di Bartolo G."/>
            <person name="Chain P."/>
            <person name="Malfatti S."/>
            <person name="Shin M."/>
            <person name="Vergez L."/>
            <person name="Schmutz J."/>
            <person name="Larimer F."/>
            <person name="Land M."/>
            <person name="Hauser L."/>
            <person name="Worsham P."/>
            <person name="Chu M."/>
            <person name="Bearden S."/>
            <person name="Garcia E."/>
            <person name="Richardson P."/>
        </authorList>
    </citation>
    <scope>NUCLEOTIDE SEQUENCE [LARGE SCALE GENOMIC DNA]</scope>
    <source>
        <strain>Pestoides F</strain>
    </source>
</reference>
<keyword id="KW-0997">Cell inner membrane</keyword>
<keyword id="KW-1003">Cell membrane</keyword>
<keyword id="KW-0472">Membrane</keyword>
<keyword id="KW-0520">NAD</keyword>
<keyword id="KW-0874">Quinone</keyword>
<keyword id="KW-1278">Translocase</keyword>
<keyword id="KW-0812">Transmembrane</keyword>
<keyword id="KW-1133">Transmembrane helix</keyword>
<keyword id="KW-0830">Ubiquinone</keyword>
<organism>
    <name type="scientific">Yersinia pestis (strain Pestoides F)</name>
    <dbReference type="NCBI Taxonomy" id="386656"/>
    <lineage>
        <taxon>Bacteria</taxon>
        <taxon>Pseudomonadati</taxon>
        <taxon>Pseudomonadota</taxon>
        <taxon>Gammaproteobacteria</taxon>
        <taxon>Enterobacterales</taxon>
        <taxon>Yersiniaceae</taxon>
        <taxon>Yersinia</taxon>
    </lineage>
</organism>
<protein>
    <recommendedName>
        <fullName evidence="1">NADH-quinone oxidoreductase subunit H</fullName>
        <ecNumber evidence="1">7.1.1.-</ecNumber>
    </recommendedName>
    <alternativeName>
        <fullName evidence="1">NADH dehydrogenase I subunit H</fullName>
    </alternativeName>
    <alternativeName>
        <fullName evidence="1">NDH-1 subunit H</fullName>
    </alternativeName>
</protein>
<accession>A4TM30</accession>
<comment type="function">
    <text evidence="1">NDH-1 shuttles electrons from NADH, via FMN and iron-sulfur (Fe-S) centers, to quinones in the respiratory chain. The immediate electron acceptor for the enzyme in this species is believed to be ubiquinone. Couples the redox reaction to proton translocation (for every two electrons transferred, four hydrogen ions are translocated across the cytoplasmic membrane), and thus conserves the redox energy in a proton gradient. This subunit may bind ubiquinone.</text>
</comment>
<comment type="catalytic activity">
    <reaction evidence="1">
        <text>a quinone + NADH + 5 H(+)(in) = a quinol + NAD(+) + 4 H(+)(out)</text>
        <dbReference type="Rhea" id="RHEA:57888"/>
        <dbReference type="ChEBI" id="CHEBI:15378"/>
        <dbReference type="ChEBI" id="CHEBI:24646"/>
        <dbReference type="ChEBI" id="CHEBI:57540"/>
        <dbReference type="ChEBI" id="CHEBI:57945"/>
        <dbReference type="ChEBI" id="CHEBI:132124"/>
    </reaction>
</comment>
<comment type="subunit">
    <text evidence="1">NDH-1 is composed of 13 different subunits. Subunits NuoA, H, J, K, L, M, N constitute the membrane sector of the complex.</text>
</comment>
<comment type="subcellular location">
    <subcellularLocation>
        <location evidence="1">Cell inner membrane</location>
        <topology evidence="1">Multi-pass membrane protein</topology>
    </subcellularLocation>
</comment>
<comment type="similarity">
    <text evidence="1">Belongs to the complex I subunit 1 family.</text>
</comment>